<comment type="function">
    <text evidence="1">Involved in regulation of actin and microtubule organization. Part of a WAVE complex that activates the Arp2/3 complex (By similarity).</text>
</comment>
<comment type="subunit">
    <text evidence="1">Binds SCAR.</text>
</comment>
<comment type="subcellular location">
    <subcellularLocation>
        <location evidence="1">Cytoplasm</location>
        <location evidence="1">Cytoskeleton</location>
    </subcellularLocation>
</comment>
<comment type="similarity">
    <text evidence="3">Belongs to the ABI family.</text>
</comment>
<dbReference type="EMBL" id="AK176699">
    <property type="protein sequence ID" value="BAD44462.1"/>
    <property type="molecule type" value="mRNA"/>
</dbReference>
<dbReference type="EMBL" id="AB017067">
    <property type="protein sequence ID" value="BAB08436.1"/>
    <property type="molecule type" value="Genomic_DNA"/>
</dbReference>
<dbReference type="EMBL" id="CP002688">
    <property type="protein sequence ID" value="AED94757.1"/>
    <property type="molecule type" value="Genomic_DNA"/>
</dbReference>
<dbReference type="EMBL" id="AY084395">
    <property type="protein sequence ID" value="AAM67279.1"/>
    <property type="molecule type" value="mRNA"/>
</dbReference>
<dbReference type="EMBL" id="AK175528">
    <property type="protein sequence ID" value="BAD43291.1"/>
    <property type="molecule type" value="mRNA"/>
</dbReference>
<dbReference type="EMBL" id="AK175563">
    <property type="protein sequence ID" value="BAD43326.1"/>
    <property type="molecule type" value="mRNA"/>
</dbReference>
<dbReference type="EMBL" id="AK176912">
    <property type="protein sequence ID" value="BAD44675.1"/>
    <property type="molecule type" value="mRNA"/>
</dbReference>
<dbReference type="EMBL" id="AY817015">
    <property type="protein sequence ID" value="AAW49259.1"/>
    <property type="molecule type" value="mRNA"/>
</dbReference>
<dbReference type="RefSeq" id="NP_199018.1">
    <property type="nucleotide sequence ID" value="NM_123568.5"/>
</dbReference>
<dbReference type="SMR" id="Q9FHY1"/>
<dbReference type="BioGRID" id="19458">
    <property type="interactions" value="1"/>
</dbReference>
<dbReference type="FunCoup" id="Q9FHY1">
    <property type="interactions" value="1"/>
</dbReference>
<dbReference type="IntAct" id="Q9FHY1">
    <property type="interactions" value="4"/>
</dbReference>
<dbReference type="STRING" id="3702.Q9FHY1"/>
<dbReference type="iPTMnet" id="Q9FHY1"/>
<dbReference type="PaxDb" id="3702-AT5G42030.1"/>
<dbReference type="ProteomicsDB" id="244638"/>
<dbReference type="EnsemblPlants" id="AT5G42030.1">
    <property type="protein sequence ID" value="AT5G42030.1"/>
    <property type="gene ID" value="AT5G42030"/>
</dbReference>
<dbReference type="GeneID" id="834208"/>
<dbReference type="Gramene" id="AT5G42030.1">
    <property type="protein sequence ID" value="AT5G42030.1"/>
    <property type="gene ID" value="AT5G42030"/>
</dbReference>
<dbReference type="KEGG" id="ath:AT5G42030"/>
<dbReference type="Araport" id="AT5G42030"/>
<dbReference type="TAIR" id="AT5G42030">
    <property type="gene designation" value="ABIL4"/>
</dbReference>
<dbReference type="HOGENOM" id="CLU_054853_1_0_1"/>
<dbReference type="InParanoid" id="Q9FHY1"/>
<dbReference type="OMA" id="DKDMEQY"/>
<dbReference type="PhylomeDB" id="Q9FHY1"/>
<dbReference type="PRO" id="PR:Q9FHY1"/>
<dbReference type="Proteomes" id="UP000006548">
    <property type="component" value="Chromosome 5"/>
</dbReference>
<dbReference type="ExpressionAtlas" id="Q9FHY1">
    <property type="expression patterns" value="baseline and differential"/>
</dbReference>
<dbReference type="GO" id="GO:0005737">
    <property type="term" value="C:cytoplasm"/>
    <property type="evidence" value="ECO:0007669"/>
    <property type="project" value="UniProtKB-KW"/>
</dbReference>
<dbReference type="GO" id="GO:0005856">
    <property type="term" value="C:cytoskeleton"/>
    <property type="evidence" value="ECO:0007669"/>
    <property type="project" value="UniProtKB-SubCell"/>
</dbReference>
<dbReference type="Gene3D" id="6.10.140.1620">
    <property type="match status" value="1"/>
</dbReference>
<dbReference type="InterPro" id="IPR028457">
    <property type="entry name" value="ABI"/>
</dbReference>
<dbReference type="PANTHER" id="PTHR10460">
    <property type="entry name" value="ABL INTERACTOR FAMILY MEMBER"/>
    <property type="match status" value="1"/>
</dbReference>
<dbReference type="PANTHER" id="PTHR10460:SF32">
    <property type="entry name" value="PROTEIN ABIL4"/>
    <property type="match status" value="1"/>
</dbReference>
<reference key="1">
    <citation type="journal article" date="2005" name="Plant Cell">
        <title>DISTORTED3/SCAR2 is a putative Arabidopsis WAVE complex subunit that activates the Arp2/3 complex and is required for epidermal morphogenesis.</title>
        <authorList>
            <person name="Basu D."/>
            <person name="Le J."/>
            <person name="El-Din El-Assal S."/>
            <person name="Huang S."/>
            <person name="Zhang C."/>
            <person name="Mallery E.L."/>
            <person name="Koliantz G."/>
            <person name="Staiger C.J."/>
            <person name="Szymanski D.B."/>
        </authorList>
    </citation>
    <scope>NUCLEOTIDE SEQUENCE [MRNA]</scope>
</reference>
<reference key="2">
    <citation type="journal article" date="1999" name="DNA Res.">
        <title>Structural analysis of Arabidopsis thaliana chromosome 5. IX. Sequence features of the regions of 1,011,550 bp covered by seventeen P1 and TAC clones.</title>
        <authorList>
            <person name="Kaneko T."/>
            <person name="Katoh T."/>
            <person name="Sato S."/>
            <person name="Nakamura Y."/>
            <person name="Asamizu E."/>
            <person name="Kotani H."/>
            <person name="Miyajima N."/>
            <person name="Tabata S."/>
        </authorList>
    </citation>
    <scope>NUCLEOTIDE SEQUENCE [LARGE SCALE GENOMIC DNA]</scope>
    <source>
        <strain>cv. Columbia</strain>
    </source>
</reference>
<reference key="3">
    <citation type="journal article" date="2017" name="Plant J.">
        <title>Araport11: a complete reannotation of the Arabidopsis thaliana reference genome.</title>
        <authorList>
            <person name="Cheng C.Y."/>
            <person name="Krishnakumar V."/>
            <person name="Chan A.P."/>
            <person name="Thibaud-Nissen F."/>
            <person name="Schobel S."/>
            <person name="Town C.D."/>
        </authorList>
    </citation>
    <scope>GENOME REANNOTATION</scope>
    <source>
        <strain>cv. Columbia</strain>
    </source>
</reference>
<reference key="4">
    <citation type="submission" date="2002-03" db="EMBL/GenBank/DDBJ databases">
        <title>Full-length cDNA from Arabidopsis thaliana.</title>
        <authorList>
            <person name="Brover V.V."/>
            <person name="Troukhan M.E."/>
            <person name="Alexandrov N.A."/>
            <person name="Lu Y.-P."/>
            <person name="Flavell R.B."/>
            <person name="Feldmann K.A."/>
        </authorList>
    </citation>
    <scope>NUCLEOTIDE SEQUENCE [LARGE SCALE MRNA]</scope>
</reference>
<reference key="5">
    <citation type="submission" date="2004-09" db="EMBL/GenBank/DDBJ databases">
        <title>Large-scale analysis of RIKEN Arabidopsis full-length (RAFL) cDNAs.</title>
        <authorList>
            <person name="Totoki Y."/>
            <person name="Seki M."/>
            <person name="Ishida J."/>
            <person name="Nakajima M."/>
            <person name="Enju A."/>
            <person name="Kamiya A."/>
            <person name="Narusaka M."/>
            <person name="Shin-i T."/>
            <person name="Nakagawa M."/>
            <person name="Sakamoto N."/>
            <person name="Oishi K."/>
            <person name="Kohara Y."/>
            <person name="Kobayashi M."/>
            <person name="Toyoda A."/>
            <person name="Sakaki Y."/>
            <person name="Sakurai T."/>
            <person name="Iida K."/>
            <person name="Akiyama K."/>
            <person name="Satou M."/>
            <person name="Toyoda T."/>
            <person name="Konagaya A."/>
            <person name="Carninci P."/>
            <person name="Kawai J."/>
            <person name="Hayashizaki Y."/>
            <person name="Shinozaki K."/>
        </authorList>
    </citation>
    <scope>NUCLEOTIDE SEQUENCE [LARGE SCALE MRNA]</scope>
    <source>
        <strain>cv. Columbia</strain>
    </source>
</reference>
<gene>
    <name type="primary">ABIL4</name>
    <name type="ordered locus">At5g42030</name>
    <name type="ORF">MJC20.13</name>
</gene>
<accession>Q9FHY1</accession>
<accession>Q8LG96</accession>
<evidence type="ECO:0000250" key="1"/>
<evidence type="ECO:0000256" key="2">
    <source>
        <dbReference type="SAM" id="MobiDB-lite"/>
    </source>
</evidence>
<evidence type="ECO:0000305" key="3"/>
<organism>
    <name type="scientific">Arabidopsis thaliana</name>
    <name type="common">Mouse-ear cress</name>
    <dbReference type="NCBI Taxonomy" id="3702"/>
    <lineage>
        <taxon>Eukaryota</taxon>
        <taxon>Viridiplantae</taxon>
        <taxon>Streptophyta</taxon>
        <taxon>Embryophyta</taxon>
        <taxon>Tracheophyta</taxon>
        <taxon>Spermatophyta</taxon>
        <taxon>Magnoliopsida</taxon>
        <taxon>eudicotyledons</taxon>
        <taxon>Gunneridae</taxon>
        <taxon>Pentapetalae</taxon>
        <taxon>rosids</taxon>
        <taxon>malvids</taxon>
        <taxon>Brassicales</taxon>
        <taxon>Brassicaceae</taxon>
        <taxon>Camelineae</taxon>
        <taxon>Arabidopsis</taxon>
    </lineage>
</organism>
<protein>
    <recommendedName>
        <fullName>Protein ABIL4</fullName>
    </recommendedName>
    <alternativeName>
        <fullName>Abl interactor-like protein 4</fullName>
        <shortName>AtABIL4</shortName>
    </alternativeName>
</protein>
<feature type="chain" id="PRO_0000191797" description="Protein ABIL4">
    <location>
        <begin position="1"/>
        <end position="279"/>
    </location>
</feature>
<feature type="region of interest" description="Disordered" evidence="2">
    <location>
        <begin position="192"/>
        <end position="211"/>
    </location>
</feature>
<feature type="region of interest" description="Disordered" evidence="2">
    <location>
        <begin position="219"/>
        <end position="241"/>
    </location>
</feature>
<feature type="compositionally biased region" description="Polar residues" evidence="2">
    <location>
        <begin position="194"/>
        <end position="208"/>
    </location>
</feature>
<feature type="compositionally biased region" description="Low complexity" evidence="2">
    <location>
        <begin position="219"/>
        <end position="228"/>
    </location>
</feature>
<feature type="sequence conflict" description="In Ref. 4; AAM67279." evidence="3" ref="4">
    <original>A</original>
    <variation>E</variation>
    <location>
        <position position="56"/>
    </location>
</feature>
<feature type="sequence conflict" description="In Ref. 4; AAM67279." evidence="3" ref="4">
    <original>R</original>
    <variation>S</variation>
    <location>
        <position position="215"/>
    </location>
</feature>
<feature type="sequence conflict" description="In Ref. 4; AAM67279." evidence="3" ref="4">
    <original>A</original>
    <variation>P</variation>
    <location>
        <position position="235"/>
    </location>
</feature>
<feature type="sequence conflict" description="In Ref. 4; AAM67279." evidence="3" ref="4">
    <original>R</original>
    <variation>S</variation>
    <location>
        <position position="278"/>
    </location>
</feature>
<keyword id="KW-0963">Cytoplasm</keyword>
<keyword id="KW-0206">Cytoskeleton</keyword>
<keyword id="KW-1185">Reference proteome</keyword>
<sequence length="279" mass="31652">MASSTSLAIVLHQSSNHDELFMKQTLQFSETLKDLKNLRKQLYSAAEYFETSYGKAEHKETVIETLKEYAAKAVVNTVDHLGSVSDKFNSFLSDNSTHFSTTHLRLSSLEQRMRLCRDYMGKSGTHQHLLLFQYPRHHKRYFFPQQGRGTSFSAGDDSHRFTSAVRSTILENLPNTARKANKTGSFSFAPIVHNNINNRTPNKRSNSPMRFPLLRSGSLLKRSSSPSQPKKPPLALPEPQRAISVSRNTEIVEIKQSSSRKGKKILMFKALMSMSKSRN</sequence>
<proteinExistence type="evidence at transcript level"/>
<name>ABIL4_ARATH</name>